<sequence>METLRYRFDGQRGARAGLEHALVGVVASGNLEVLVERVPLEGAMEIEILTAARGFGAIWQAVLDDFAARHPLRDVRISINDVGATPAVVSLRLEQALEVLQGADA</sequence>
<organism>
    <name type="scientific">Xanthomonas euvesicatoria pv. vesicatoria (strain 85-10)</name>
    <name type="common">Xanthomonas campestris pv. vesicatoria</name>
    <dbReference type="NCBI Taxonomy" id="316273"/>
    <lineage>
        <taxon>Bacteria</taxon>
        <taxon>Pseudomonadati</taxon>
        <taxon>Pseudomonadota</taxon>
        <taxon>Gammaproteobacteria</taxon>
        <taxon>Lysobacterales</taxon>
        <taxon>Lysobacteraceae</taxon>
        <taxon>Xanthomonas</taxon>
    </lineage>
</organism>
<protein>
    <recommendedName>
        <fullName evidence="1">Malonate decarboxylase acyl carrier protein</fullName>
    </recommendedName>
    <alternativeName>
        <fullName evidence="1">Malonate decarboxylase subunit delta</fullName>
    </alternativeName>
</protein>
<reference key="1">
    <citation type="journal article" date="2005" name="J. Bacteriol.">
        <title>Insights into genome plasticity and pathogenicity of the plant pathogenic Bacterium Xanthomonas campestris pv. vesicatoria revealed by the complete genome sequence.</title>
        <authorList>
            <person name="Thieme F."/>
            <person name="Koebnik R."/>
            <person name="Bekel T."/>
            <person name="Berger C."/>
            <person name="Boch J."/>
            <person name="Buettner D."/>
            <person name="Caldana C."/>
            <person name="Gaigalat L."/>
            <person name="Goesmann A."/>
            <person name="Kay S."/>
            <person name="Kirchner O."/>
            <person name="Lanz C."/>
            <person name="Linke B."/>
            <person name="McHardy A.C."/>
            <person name="Meyer F."/>
            <person name="Mittenhuber G."/>
            <person name="Nies D.H."/>
            <person name="Niesbach-Kloesgen U."/>
            <person name="Patschkowski T."/>
            <person name="Rueckert C."/>
            <person name="Rupp O."/>
            <person name="Schneiker S."/>
            <person name="Schuster S.C."/>
            <person name="Vorhoelter F.J."/>
            <person name="Weber E."/>
            <person name="Puehler A."/>
            <person name="Bonas U."/>
            <person name="Bartels D."/>
            <person name="Kaiser O."/>
        </authorList>
    </citation>
    <scope>NUCLEOTIDE SEQUENCE [LARGE SCALE GENOMIC DNA]</scope>
    <source>
        <strain>85-10</strain>
    </source>
</reference>
<proteinExistence type="inferred from homology"/>
<name>MDCC_XANE5</name>
<feature type="chain" id="PRO_0000303116" description="Malonate decarboxylase acyl carrier protein">
    <location>
        <begin position="1"/>
        <end position="105"/>
    </location>
</feature>
<feature type="modified residue" description="O-(phosphoribosyl dephospho-coenzyme A)serine" evidence="1">
    <location>
        <position position="28"/>
    </location>
</feature>
<dbReference type="EMBL" id="AM039952">
    <property type="protein sequence ID" value="CAJ22226.1"/>
    <property type="molecule type" value="Genomic_DNA"/>
</dbReference>
<dbReference type="RefSeq" id="WP_008577475.1">
    <property type="nucleotide sequence ID" value="NZ_CP017190.1"/>
</dbReference>
<dbReference type="SMR" id="Q3BY37"/>
<dbReference type="STRING" id="456327.BJD11_19845"/>
<dbReference type="GeneID" id="61777454"/>
<dbReference type="KEGG" id="xcv:XCV0595"/>
<dbReference type="eggNOG" id="COG3052">
    <property type="taxonomic scope" value="Bacteria"/>
</dbReference>
<dbReference type="HOGENOM" id="CLU_173135_0_0_6"/>
<dbReference type="Proteomes" id="UP000007069">
    <property type="component" value="Chromosome"/>
</dbReference>
<dbReference type="GO" id="GO:0005737">
    <property type="term" value="C:cytoplasm"/>
    <property type="evidence" value="ECO:0007669"/>
    <property type="project" value="UniProtKB-SubCell"/>
</dbReference>
<dbReference type="GO" id="GO:0000036">
    <property type="term" value="F:acyl carrier activity"/>
    <property type="evidence" value="ECO:0007669"/>
    <property type="project" value="UniProtKB-UniRule"/>
</dbReference>
<dbReference type="HAMAP" id="MF_00710">
    <property type="entry name" value="Malonate_deCO2ase_dsu"/>
    <property type="match status" value="1"/>
</dbReference>
<dbReference type="InterPro" id="IPR023439">
    <property type="entry name" value="Mal_deCO2ase/Cit_lyase_ACP"/>
</dbReference>
<dbReference type="InterPro" id="IPR009662">
    <property type="entry name" value="Malonate_deCO2ase_dsu"/>
</dbReference>
<dbReference type="NCBIfam" id="TIGR03130">
    <property type="entry name" value="malonate_delta"/>
    <property type="match status" value="1"/>
</dbReference>
<dbReference type="Pfam" id="PF06857">
    <property type="entry name" value="ACP"/>
    <property type="match status" value="1"/>
</dbReference>
<evidence type="ECO:0000255" key="1">
    <source>
        <dbReference type="HAMAP-Rule" id="MF_00710"/>
    </source>
</evidence>
<gene>
    <name evidence="1" type="primary">mdcC</name>
    <name type="ordered locus">XCV0595</name>
</gene>
<accession>Q3BY37</accession>
<keyword id="KW-0963">Cytoplasm</keyword>
<keyword id="KW-0597">Phosphoprotein</keyword>
<comment type="function">
    <text evidence="1">Subunit of malonate decarboxylase, it is an acyl carrier protein to which acetyl and malonyl thioester residues are bound via a 2'-(5''-phosphoribosyl)-3'-dephospho-CoA prosthetic group and turn over during the catalytic mechanism.</text>
</comment>
<comment type="subcellular location">
    <subcellularLocation>
        <location evidence="1">Cytoplasm</location>
    </subcellularLocation>
</comment>
<comment type="PTM">
    <text evidence="1">Covalently binds the prosthetic group of malonate decarboxylase.</text>
</comment>
<comment type="similarity">
    <text evidence="1">Belongs to the MdcC family.</text>
</comment>